<name>G137A_MOUSE</name>
<dbReference type="EMBL" id="BC048078">
    <property type="protein sequence ID" value="AAH48078.1"/>
    <property type="molecule type" value="mRNA"/>
</dbReference>
<dbReference type="EMBL" id="AY255566">
    <property type="protein sequence ID" value="AAO85078.1"/>
    <property type="molecule type" value="mRNA"/>
</dbReference>
<dbReference type="CCDS" id="CCDS29512.1"/>
<dbReference type="RefSeq" id="NP_001170831.1">
    <property type="nucleotide sequence ID" value="NM_001177360.1"/>
</dbReference>
<dbReference type="RefSeq" id="NP_997103.1">
    <property type="nucleotide sequence ID" value="NM_207220.3"/>
</dbReference>
<dbReference type="FunCoup" id="Q80ZU9">
    <property type="interactions" value="289"/>
</dbReference>
<dbReference type="STRING" id="10090.ENSMUSP00000130969"/>
<dbReference type="GlyCosmos" id="Q80ZU9">
    <property type="glycosylation" value="2 sites, No reported glycans"/>
</dbReference>
<dbReference type="GlyGen" id="Q80ZU9">
    <property type="glycosylation" value="2 sites"/>
</dbReference>
<dbReference type="iPTMnet" id="Q80ZU9"/>
<dbReference type="PhosphoSitePlus" id="Q80ZU9"/>
<dbReference type="SwissPalm" id="Q80ZU9"/>
<dbReference type="PaxDb" id="10090-ENSMUSP00000130969"/>
<dbReference type="ProteomicsDB" id="273402"/>
<dbReference type="Antibodypedia" id="15349">
    <property type="antibodies" value="184 antibodies from 22 providers"/>
</dbReference>
<dbReference type="Ensembl" id="ENSMUST00000166115.9">
    <property type="protein sequence ID" value="ENSMUSP00000130969.2"/>
    <property type="gene ID" value="ENSMUSG00000024958.15"/>
</dbReference>
<dbReference type="Ensembl" id="ENSMUST00000237934.2">
    <property type="protein sequence ID" value="ENSMUSP00000158264.2"/>
    <property type="gene ID" value="ENSMUSG00000024958.15"/>
</dbReference>
<dbReference type="GeneID" id="107173"/>
<dbReference type="KEGG" id="mmu:107173"/>
<dbReference type="UCSC" id="uc008gjk.2">
    <property type="organism name" value="mouse"/>
</dbReference>
<dbReference type="AGR" id="MGI:2147529"/>
<dbReference type="CTD" id="56834"/>
<dbReference type="MGI" id="MGI:2147529">
    <property type="gene designation" value="Gpr137"/>
</dbReference>
<dbReference type="VEuPathDB" id="HostDB:ENSMUSG00000024958"/>
<dbReference type="eggNOG" id="ENOG502QQ83">
    <property type="taxonomic scope" value="Eukaryota"/>
</dbReference>
<dbReference type="GeneTree" id="ENSGT00940000153986"/>
<dbReference type="InParanoid" id="Q80ZU9"/>
<dbReference type="OMA" id="YFFDHPG"/>
<dbReference type="OrthoDB" id="192544at2759"/>
<dbReference type="PhylomeDB" id="Q80ZU9"/>
<dbReference type="TreeFam" id="TF329003"/>
<dbReference type="BioGRID-ORCS" id="107173">
    <property type="hits" value="3 hits in 77 CRISPR screens"/>
</dbReference>
<dbReference type="PRO" id="PR:Q80ZU9"/>
<dbReference type="Proteomes" id="UP000000589">
    <property type="component" value="Chromosome 19"/>
</dbReference>
<dbReference type="RNAct" id="Q80ZU9">
    <property type="molecule type" value="protein"/>
</dbReference>
<dbReference type="Bgee" id="ENSMUSG00000024958">
    <property type="expression patterns" value="Expressed in primary visual cortex and 204 other cell types or tissues"/>
</dbReference>
<dbReference type="ExpressionAtlas" id="Q80ZU9">
    <property type="expression patterns" value="baseline and differential"/>
</dbReference>
<dbReference type="GO" id="GO:0005765">
    <property type="term" value="C:lysosomal membrane"/>
    <property type="evidence" value="ECO:0000250"/>
    <property type="project" value="UniProtKB"/>
</dbReference>
<dbReference type="GO" id="GO:0006914">
    <property type="term" value="P:autophagy"/>
    <property type="evidence" value="ECO:0007669"/>
    <property type="project" value="UniProtKB-KW"/>
</dbReference>
<dbReference type="CDD" id="cd21474">
    <property type="entry name" value="7tm_GPR137A"/>
    <property type="match status" value="1"/>
</dbReference>
<dbReference type="InterPro" id="IPR029723">
    <property type="entry name" value="GPR137"/>
</dbReference>
<dbReference type="PANTHER" id="PTHR15146">
    <property type="entry name" value="INTEGRAL MEMBRANE PROTEIN GPR137"/>
    <property type="match status" value="1"/>
</dbReference>
<dbReference type="PANTHER" id="PTHR15146:SF5">
    <property type="entry name" value="INTEGRAL MEMBRANE PROTEIN GPR137"/>
    <property type="match status" value="1"/>
</dbReference>
<gene>
    <name type="primary">Gpr137</name>
    <name type="synonym">Tm7sf1l1</name>
</gene>
<comment type="function">
    <text evidence="1">Lysosomal integral membrane protein that may regulate MTORC1 complex translocation to lysosomes. May play a role in autophagy.</text>
</comment>
<comment type="function">
    <text evidence="3">May activate Wnt/beta-catenin signaling to modulate epithelial cell function.</text>
</comment>
<comment type="subcellular location">
    <subcellularLocation>
        <location evidence="1">Lysosome membrane</location>
        <topology evidence="2">Multi-pass membrane protein</topology>
    </subcellularLocation>
</comment>
<comment type="similarity">
    <text evidence="4">Belongs to the GPR137 family.</text>
</comment>
<reference key="1">
    <citation type="journal article" date="2004" name="Genome Res.">
        <title>The status, quality, and expansion of the NIH full-length cDNA project: the Mammalian Gene Collection (MGC).</title>
        <authorList>
            <consortium name="The MGC Project Team"/>
        </authorList>
    </citation>
    <scope>NUCLEOTIDE SEQUENCE [LARGE SCALE MRNA]</scope>
    <source>
        <tissue>Olfactory epithelium</tissue>
    </source>
</reference>
<reference key="2">
    <citation type="journal article" date="2003" name="Proc. Natl. Acad. Sci. U.S.A.">
        <title>The G protein-coupled receptor repertoires of human and mouse.</title>
        <authorList>
            <person name="Vassilatis D.K."/>
            <person name="Hohmann J.G."/>
            <person name="Zeng H."/>
            <person name="Li F."/>
            <person name="Ranchalis J.E."/>
            <person name="Mortrud M.T."/>
            <person name="Brown A."/>
            <person name="Rodriguez S.S."/>
            <person name="Weller J.R."/>
            <person name="Wright A.C."/>
            <person name="Bergmann J.E."/>
            <person name="Gaitanaris G.A."/>
        </authorList>
    </citation>
    <scope>NUCLEOTIDE SEQUENCE [LARGE SCALE MRNA] OF 1-86</scope>
</reference>
<reference key="3">
    <citation type="journal article" date="2017" name="Elife">
        <title>The ESRP1-GPR137 axis contributes to intestinal pathogenesis.</title>
        <authorList>
            <person name="Mager L.F."/>
            <person name="Koelzer V.H."/>
            <person name="Stuber R."/>
            <person name="Thoo L."/>
            <person name="Keller I."/>
            <person name="Koeck I."/>
            <person name="Langenegger M."/>
            <person name="Simillion C."/>
            <person name="Pfister S.P."/>
            <person name="Faderl M."/>
            <person name="Genitsch V."/>
            <person name="Tcymbarevich I."/>
            <person name="Juillerat P."/>
            <person name="Li X."/>
            <person name="Xia Y."/>
            <person name="Karamitopoulou E."/>
            <person name="Lyck R."/>
            <person name="Zlobec I."/>
            <person name="Hapfelmeier S."/>
            <person name="Bruggmann R."/>
            <person name="McCoy K.D."/>
            <person name="Macpherson A.J."/>
            <person name="Mueller C."/>
            <person name="Beutler B."/>
            <person name="Krebs P."/>
        </authorList>
    </citation>
    <scope>FUNCTION</scope>
</reference>
<feature type="chain" id="PRO_0000269997" description="Integral membrane protein GPR137">
    <location>
        <begin position="1"/>
        <end position="396"/>
    </location>
</feature>
<feature type="topological domain" description="Lumenal" evidence="4">
    <location>
        <begin position="1"/>
        <end position="31"/>
    </location>
</feature>
<feature type="transmembrane region" description="Helical; Name=1" evidence="2">
    <location>
        <begin position="32"/>
        <end position="52"/>
    </location>
</feature>
<feature type="topological domain" description="Cytoplasmic" evidence="4">
    <location>
        <begin position="53"/>
        <end position="60"/>
    </location>
</feature>
<feature type="transmembrane region" description="Helical; Name=2" evidence="2">
    <location>
        <begin position="61"/>
        <end position="81"/>
    </location>
</feature>
<feature type="topological domain" description="Lumenal" evidence="4">
    <location>
        <begin position="82"/>
        <end position="89"/>
    </location>
</feature>
<feature type="transmembrane region" description="Helical; Name=3" evidence="2">
    <location>
        <begin position="90"/>
        <end position="110"/>
    </location>
</feature>
<feature type="topological domain" description="Cytoplasmic" evidence="4">
    <location>
        <begin position="111"/>
        <end position="140"/>
    </location>
</feature>
<feature type="transmembrane region" description="Helical; Name=4" evidence="2">
    <location>
        <begin position="141"/>
        <end position="161"/>
    </location>
</feature>
<feature type="topological domain" description="Lumenal" evidence="4">
    <location>
        <begin position="162"/>
        <end position="175"/>
    </location>
</feature>
<feature type="transmembrane region" description="Helical; Name=5" evidence="2">
    <location>
        <begin position="176"/>
        <end position="196"/>
    </location>
</feature>
<feature type="topological domain" description="Cytoplasmic" evidence="4">
    <location>
        <begin position="197"/>
        <end position="217"/>
    </location>
</feature>
<feature type="transmembrane region" description="Helical; Name=6" evidence="2">
    <location>
        <begin position="218"/>
        <end position="242"/>
    </location>
</feature>
<feature type="topological domain" description="Lumenal" evidence="4">
    <location>
        <begin position="243"/>
        <end position="274"/>
    </location>
</feature>
<feature type="transmembrane region" description="Helical; Name=7" evidence="2">
    <location>
        <begin position="275"/>
        <end position="295"/>
    </location>
</feature>
<feature type="topological domain" description="Cytoplasmic" evidence="4">
    <location>
        <begin position="296"/>
        <end position="396"/>
    </location>
</feature>
<feature type="glycosylation site" description="N-linked (GlcNAc...) asparagine" evidence="2">
    <location>
        <position position="4"/>
    </location>
</feature>
<feature type="glycosylation site" description="N-linked (GlcNAc...) asparagine" evidence="2">
    <location>
        <position position="257"/>
    </location>
</feature>
<accession>Q80ZU9</accession>
<accession>Q80UB6</accession>
<proteinExistence type="evidence at transcript level"/>
<evidence type="ECO:0000250" key="1">
    <source>
        <dbReference type="UniProtKB" id="Q96N19"/>
    </source>
</evidence>
<evidence type="ECO:0000255" key="2"/>
<evidence type="ECO:0000269" key="3">
    <source>
    </source>
</evidence>
<evidence type="ECO:0000305" key="4"/>
<protein>
    <recommendedName>
        <fullName>Integral membrane protein GPR137</fullName>
    </recommendedName>
    <alternativeName>
        <fullName>Transmembrane 7 superfamily member 1-like 1 protein</fullName>
    </alternativeName>
</protein>
<sequence length="396" mass="43574">MESNLSGLVPAAGLVPALPPTVTLGLTAAYTALYALLFFSVYAQLWLVLLYGHKRLSYQTVFLALCLLWAALRTTLFSFYFRDTPRANRLGPLPFWLLYCCPVCLQFFTLTLMNLYFVQVVFKAKAKRRPEMSRGLLAVRGAFVGASLLFLLVNVLCAVLSRQRQAQPWVLLLVRVLVSDSLFVICALSLAACLCLVARRAPSTSIYLEAKGTSVCQAAAIGGAMVLLYASRACYNLAALALAPRSRLDAFDYDWYNVSDQADLVNDLGNKGYLVFGLILFVWELLPTTLLVGFFRVHRPPQDLSTSRILNGQVFGSRSYFFDRAGHCEDEGCSWEHSRSESTSMSGSLGSGSWYGAIGREPGWGGASQTRTTPLLFSQVPGPGSHHHSLYSTPQT</sequence>
<keyword id="KW-0072">Autophagy</keyword>
<keyword id="KW-0325">Glycoprotein</keyword>
<keyword id="KW-0458">Lysosome</keyword>
<keyword id="KW-0472">Membrane</keyword>
<keyword id="KW-1185">Reference proteome</keyword>
<keyword id="KW-0812">Transmembrane</keyword>
<keyword id="KW-1133">Transmembrane helix</keyword>
<organism>
    <name type="scientific">Mus musculus</name>
    <name type="common">Mouse</name>
    <dbReference type="NCBI Taxonomy" id="10090"/>
    <lineage>
        <taxon>Eukaryota</taxon>
        <taxon>Metazoa</taxon>
        <taxon>Chordata</taxon>
        <taxon>Craniata</taxon>
        <taxon>Vertebrata</taxon>
        <taxon>Euteleostomi</taxon>
        <taxon>Mammalia</taxon>
        <taxon>Eutheria</taxon>
        <taxon>Euarchontoglires</taxon>
        <taxon>Glires</taxon>
        <taxon>Rodentia</taxon>
        <taxon>Myomorpha</taxon>
        <taxon>Muroidea</taxon>
        <taxon>Muridae</taxon>
        <taxon>Murinae</taxon>
        <taxon>Mus</taxon>
        <taxon>Mus</taxon>
    </lineage>
</organism>